<reference key="1">
    <citation type="journal article" date="2000" name="Nature">
        <title>The genome sequence of the food-borne pathogen Campylobacter jejuni reveals hypervariable sequences.</title>
        <authorList>
            <person name="Parkhill J."/>
            <person name="Wren B.W."/>
            <person name="Mungall K.L."/>
            <person name="Ketley J.M."/>
            <person name="Churcher C.M."/>
            <person name="Basham D."/>
            <person name="Chillingworth T."/>
            <person name="Davies R.M."/>
            <person name="Feltwell T."/>
            <person name="Holroyd S."/>
            <person name="Jagels K."/>
            <person name="Karlyshev A.V."/>
            <person name="Moule S."/>
            <person name="Pallen M.J."/>
            <person name="Penn C.W."/>
            <person name="Quail M.A."/>
            <person name="Rajandream M.A."/>
            <person name="Rutherford K.M."/>
            <person name="van Vliet A.H.M."/>
            <person name="Whitehead S."/>
            <person name="Barrell B.G."/>
        </authorList>
    </citation>
    <scope>NUCLEOTIDE SEQUENCE [LARGE SCALE GENOMIC DNA]</scope>
    <source>
        <strain>ATCC 700819 / NCTC 11168</strain>
    </source>
</reference>
<gene>
    <name evidence="1" type="primary">rpsM</name>
    <name type="ordered locus">Cj1592</name>
</gene>
<feature type="chain" id="PRO_0000132075" description="Small ribosomal subunit protein uS13">
    <location>
        <begin position="1"/>
        <end position="121"/>
    </location>
</feature>
<feature type="region of interest" description="Disordered" evidence="2">
    <location>
        <begin position="95"/>
        <end position="121"/>
    </location>
</feature>
<evidence type="ECO:0000255" key="1">
    <source>
        <dbReference type="HAMAP-Rule" id="MF_01315"/>
    </source>
</evidence>
<evidence type="ECO:0000256" key="2">
    <source>
        <dbReference type="SAM" id="MobiDB-lite"/>
    </source>
</evidence>
<evidence type="ECO:0000305" key="3"/>
<sequence>MARIAGVDLPKKKRIEYGLTYIYGIGLFTSRKILDKVGISYDKRVHELSEDEAAAIRKEIQENYMVEGDLRKQVAMDIKALMDLGSFRGLRHRKGLPVRGQKTKTNARTRKGKRKTVGAKS</sequence>
<keyword id="KW-1185">Reference proteome</keyword>
<keyword id="KW-0687">Ribonucleoprotein</keyword>
<keyword id="KW-0689">Ribosomal protein</keyword>
<keyword id="KW-0694">RNA-binding</keyword>
<keyword id="KW-0699">rRNA-binding</keyword>
<keyword id="KW-0820">tRNA-binding</keyword>
<organism>
    <name type="scientific">Campylobacter jejuni subsp. jejuni serotype O:2 (strain ATCC 700819 / NCTC 11168)</name>
    <dbReference type="NCBI Taxonomy" id="192222"/>
    <lineage>
        <taxon>Bacteria</taxon>
        <taxon>Pseudomonadati</taxon>
        <taxon>Campylobacterota</taxon>
        <taxon>Epsilonproteobacteria</taxon>
        <taxon>Campylobacterales</taxon>
        <taxon>Campylobacteraceae</taxon>
        <taxon>Campylobacter</taxon>
    </lineage>
</organism>
<dbReference type="EMBL" id="AL111168">
    <property type="protein sequence ID" value="CAL35689.1"/>
    <property type="molecule type" value="Genomic_DNA"/>
</dbReference>
<dbReference type="PIR" id="F81254">
    <property type="entry name" value="F81254"/>
</dbReference>
<dbReference type="RefSeq" id="WP_002800121.1">
    <property type="nucleotide sequence ID" value="NZ_SZUC01000002.1"/>
</dbReference>
<dbReference type="RefSeq" id="YP_002344961.1">
    <property type="nucleotide sequence ID" value="NC_002163.1"/>
</dbReference>
<dbReference type="SMR" id="Q9PM83"/>
<dbReference type="IntAct" id="Q9PM83">
    <property type="interactions" value="1"/>
</dbReference>
<dbReference type="STRING" id="192222.Cj1592"/>
<dbReference type="PaxDb" id="192222-Cj1592"/>
<dbReference type="EnsemblBacteria" id="CAL35689">
    <property type="protein sequence ID" value="CAL35689"/>
    <property type="gene ID" value="Cj1592"/>
</dbReference>
<dbReference type="GeneID" id="905825"/>
<dbReference type="KEGG" id="cje:Cj1592"/>
<dbReference type="PATRIC" id="fig|192222.6.peg.1568"/>
<dbReference type="eggNOG" id="COG0099">
    <property type="taxonomic scope" value="Bacteria"/>
</dbReference>
<dbReference type="HOGENOM" id="CLU_103849_1_2_7"/>
<dbReference type="OrthoDB" id="9803610at2"/>
<dbReference type="Proteomes" id="UP000000799">
    <property type="component" value="Chromosome"/>
</dbReference>
<dbReference type="GO" id="GO:0005829">
    <property type="term" value="C:cytosol"/>
    <property type="evidence" value="ECO:0007669"/>
    <property type="project" value="TreeGrafter"/>
</dbReference>
<dbReference type="GO" id="GO:0015935">
    <property type="term" value="C:small ribosomal subunit"/>
    <property type="evidence" value="ECO:0007669"/>
    <property type="project" value="TreeGrafter"/>
</dbReference>
<dbReference type="GO" id="GO:0019843">
    <property type="term" value="F:rRNA binding"/>
    <property type="evidence" value="ECO:0007669"/>
    <property type="project" value="UniProtKB-UniRule"/>
</dbReference>
<dbReference type="GO" id="GO:0003735">
    <property type="term" value="F:structural constituent of ribosome"/>
    <property type="evidence" value="ECO:0007669"/>
    <property type="project" value="InterPro"/>
</dbReference>
<dbReference type="GO" id="GO:0000049">
    <property type="term" value="F:tRNA binding"/>
    <property type="evidence" value="ECO:0007669"/>
    <property type="project" value="UniProtKB-UniRule"/>
</dbReference>
<dbReference type="GO" id="GO:0006412">
    <property type="term" value="P:translation"/>
    <property type="evidence" value="ECO:0007669"/>
    <property type="project" value="UniProtKB-UniRule"/>
</dbReference>
<dbReference type="FunFam" id="1.10.8.50:FF:000001">
    <property type="entry name" value="30S ribosomal protein S13"/>
    <property type="match status" value="1"/>
</dbReference>
<dbReference type="FunFam" id="4.10.910.10:FF:000001">
    <property type="entry name" value="30S ribosomal protein S13"/>
    <property type="match status" value="1"/>
</dbReference>
<dbReference type="Gene3D" id="1.10.8.50">
    <property type="match status" value="1"/>
</dbReference>
<dbReference type="Gene3D" id="4.10.910.10">
    <property type="entry name" value="30s ribosomal protein s13, domain 2"/>
    <property type="match status" value="1"/>
</dbReference>
<dbReference type="HAMAP" id="MF_01315">
    <property type="entry name" value="Ribosomal_uS13"/>
    <property type="match status" value="1"/>
</dbReference>
<dbReference type="InterPro" id="IPR027437">
    <property type="entry name" value="Rbsml_uS13_C"/>
</dbReference>
<dbReference type="InterPro" id="IPR001892">
    <property type="entry name" value="Ribosomal_uS13"/>
</dbReference>
<dbReference type="InterPro" id="IPR010979">
    <property type="entry name" value="Ribosomal_uS13-like_H2TH"/>
</dbReference>
<dbReference type="InterPro" id="IPR019980">
    <property type="entry name" value="Ribosomal_uS13_bac-type"/>
</dbReference>
<dbReference type="InterPro" id="IPR018269">
    <property type="entry name" value="Ribosomal_uS13_CS"/>
</dbReference>
<dbReference type="NCBIfam" id="TIGR03631">
    <property type="entry name" value="uS13_bact"/>
    <property type="match status" value="1"/>
</dbReference>
<dbReference type="PANTHER" id="PTHR10871">
    <property type="entry name" value="30S RIBOSOMAL PROTEIN S13/40S RIBOSOMAL PROTEIN S18"/>
    <property type="match status" value="1"/>
</dbReference>
<dbReference type="PANTHER" id="PTHR10871:SF1">
    <property type="entry name" value="SMALL RIBOSOMAL SUBUNIT PROTEIN US13M"/>
    <property type="match status" value="1"/>
</dbReference>
<dbReference type="Pfam" id="PF00416">
    <property type="entry name" value="Ribosomal_S13"/>
    <property type="match status" value="1"/>
</dbReference>
<dbReference type="PIRSF" id="PIRSF002134">
    <property type="entry name" value="Ribosomal_S13"/>
    <property type="match status" value="1"/>
</dbReference>
<dbReference type="SUPFAM" id="SSF46946">
    <property type="entry name" value="S13-like H2TH domain"/>
    <property type="match status" value="1"/>
</dbReference>
<dbReference type="PROSITE" id="PS00646">
    <property type="entry name" value="RIBOSOMAL_S13_1"/>
    <property type="match status" value="1"/>
</dbReference>
<dbReference type="PROSITE" id="PS50159">
    <property type="entry name" value="RIBOSOMAL_S13_2"/>
    <property type="match status" value="1"/>
</dbReference>
<name>RS13_CAMJE</name>
<proteinExistence type="inferred from homology"/>
<protein>
    <recommendedName>
        <fullName evidence="1">Small ribosomal subunit protein uS13</fullName>
    </recommendedName>
    <alternativeName>
        <fullName evidence="3">30S ribosomal protein S13</fullName>
    </alternativeName>
</protein>
<accession>Q9PM83</accession>
<accession>Q0P836</accession>
<comment type="function">
    <text evidence="1">Located at the top of the head of the 30S subunit, it contacts several helices of the 16S rRNA. In the 70S ribosome it contacts the 23S rRNA (bridge B1a) and protein L5 of the 50S subunit (bridge B1b), connecting the 2 subunits; these bridges are implicated in subunit movement. Contacts the tRNAs in the A and P-sites.</text>
</comment>
<comment type="subunit">
    <text evidence="1">Part of the 30S ribosomal subunit. Forms a loose heterodimer with protein S19. Forms two bridges to the 50S subunit in the 70S ribosome.</text>
</comment>
<comment type="similarity">
    <text evidence="1">Belongs to the universal ribosomal protein uS13 family.</text>
</comment>